<gene>
    <name type="primary">stn1</name>
    <name type="ORF">SPBC409.12c</name>
</gene>
<organism>
    <name type="scientific">Schizosaccharomyces pombe (strain 972 / ATCC 24843)</name>
    <name type="common">Fission yeast</name>
    <dbReference type="NCBI Taxonomy" id="284812"/>
    <lineage>
        <taxon>Eukaryota</taxon>
        <taxon>Fungi</taxon>
        <taxon>Dikarya</taxon>
        <taxon>Ascomycota</taxon>
        <taxon>Taphrinomycotina</taxon>
        <taxon>Schizosaccharomycetes</taxon>
        <taxon>Schizosaccharomycetales</taxon>
        <taxon>Schizosaccharomycetaceae</taxon>
        <taxon>Schizosaccharomyces</taxon>
    </lineage>
</organism>
<name>STN1_SCHPO</name>
<dbReference type="EMBL" id="CU329671">
    <property type="protein sequence ID" value="CAL44730.1"/>
    <property type="molecule type" value="Genomic_DNA"/>
</dbReference>
<dbReference type="RefSeq" id="XP_001713126.1">
    <property type="nucleotide sequence ID" value="XM_001713074.2"/>
</dbReference>
<dbReference type="PDB" id="3KF6">
    <property type="method" value="X-ray"/>
    <property type="resolution" value="1.65 A"/>
    <property type="chains" value="A=2-159"/>
</dbReference>
<dbReference type="PDBsum" id="3KF6"/>
<dbReference type="SMR" id="Q0E7J7"/>
<dbReference type="BioGRID" id="277567">
    <property type="interactions" value="23"/>
</dbReference>
<dbReference type="ComplexPortal" id="CPX-25746">
    <property type="entry name" value="CST complex"/>
</dbReference>
<dbReference type="DIP" id="DIP-38936N"/>
<dbReference type="FunCoup" id="Q0E7J7">
    <property type="interactions" value="6"/>
</dbReference>
<dbReference type="IntAct" id="Q0E7J7">
    <property type="interactions" value="4"/>
</dbReference>
<dbReference type="MINT" id="Q0E7J7"/>
<dbReference type="STRING" id="284812.Q0E7J7"/>
<dbReference type="iPTMnet" id="Q0E7J7"/>
<dbReference type="PaxDb" id="4896-SPBC409.12c.1"/>
<dbReference type="EnsemblFungi" id="SPBC409.12c.1">
    <property type="protein sequence ID" value="SPBC409.12c.1:pep"/>
    <property type="gene ID" value="SPBC409.12c"/>
</dbReference>
<dbReference type="PomBase" id="SPBC409.12c">
    <property type="gene designation" value="stn1"/>
</dbReference>
<dbReference type="VEuPathDB" id="FungiDB:SPBC409.12c"/>
<dbReference type="HOGENOM" id="CLU_845089_0_0_1"/>
<dbReference type="InParanoid" id="Q0E7J7"/>
<dbReference type="OMA" id="RWNPMFI"/>
<dbReference type="EvolutionaryTrace" id="Q0E7J7"/>
<dbReference type="PRO" id="PR:Q0E7J7"/>
<dbReference type="Proteomes" id="UP000002485">
    <property type="component" value="Chromosome II"/>
</dbReference>
<dbReference type="GO" id="GO:0140445">
    <property type="term" value="C:chromosome, telomeric repeat region"/>
    <property type="evidence" value="ECO:0000314"/>
    <property type="project" value="PomBase"/>
</dbReference>
<dbReference type="GO" id="GO:1990879">
    <property type="term" value="C:CST complex"/>
    <property type="evidence" value="ECO:0000353"/>
    <property type="project" value="PomBase"/>
</dbReference>
<dbReference type="GO" id="GO:0005634">
    <property type="term" value="C:nucleus"/>
    <property type="evidence" value="ECO:0007005"/>
    <property type="project" value="PomBase"/>
</dbReference>
<dbReference type="GO" id="GO:0000782">
    <property type="term" value="C:telomere cap complex"/>
    <property type="evidence" value="ECO:0000314"/>
    <property type="project" value="PomBase"/>
</dbReference>
<dbReference type="GO" id="GO:0043047">
    <property type="term" value="F:single-stranded telomeric DNA binding"/>
    <property type="evidence" value="ECO:0000266"/>
    <property type="project" value="PomBase"/>
</dbReference>
<dbReference type="GO" id="GO:0042162">
    <property type="term" value="F:telomeric DNA binding"/>
    <property type="evidence" value="ECO:0000318"/>
    <property type="project" value="GO_Central"/>
</dbReference>
<dbReference type="GO" id="GO:0016233">
    <property type="term" value="P:telomere capping"/>
    <property type="evidence" value="ECO:0000315"/>
    <property type="project" value="PomBase"/>
</dbReference>
<dbReference type="GO" id="GO:0000723">
    <property type="term" value="P:telomere maintenance"/>
    <property type="evidence" value="ECO:0000315"/>
    <property type="project" value="PomBase"/>
</dbReference>
<dbReference type="Gene3D" id="2.40.50.140">
    <property type="entry name" value="Nucleic acid-binding proteins"/>
    <property type="match status" value="1"/>
</dbReference>
<dbReference type="InterPro" id="IPR012340">
    <property type="entry name" value="NA-bd_OB-fold"/>
</dbReference>
<dbReference type="InterPro" id="IPR018856">
    <property type="entry name" value="Stn1_N"/>
</dbReference>
<dbReference type="Pfam" id="PF10451">
    <property type="entry name" value="Stn1"/>
    <property type="match status" value="1"/>
</dbReference>
<dbReference type="SUPFAM" id="SSF50249">
    <property type="entry name" value="Nucleic acid-binding proteins"/>
    <property type="match status" value="1"/>
</dbReference>
<proteinExistence type="evidence at protein level"/>
<sequence length="325" mass="37995">MLENENQLTHQFPTLSRWNPMFISDVHKISFHPHLQRYIGFWMGFPIRWIQIVGYIAAIDIYEGKHVLTVDDCSGMVLRVVFIIQDDFSMSKRAISMSPGNVVCVFGKINSFRSEVELIAQSFEELRDPNDEWKAWQKRMRYKKNLTKISKNHHSIIRTPKKSYFPKDHAKELLKCIRQMCKLNVQAGFTIEELIIYLKAKELHLPLVHIFNVENEIVENCDGNHILALNFSLQTLLQHGRIVRKSNSVYMLVTSKDIIRFVIPLMASGLLEAHKVQSIVRDSNPMFITLPLSAIAKHICQFLLRTKGKWRQAKKYTWVRDNQFV</sequence>
<accession>Q0E7J7</accession>
<comment type="function">
    <text evidence="1">Required for telomere maintenance.</text>
</comment>
<comment type="subunit">
    <text evidence="1">Interacts with ten1.</text>
</comment>
<comment type="subcellular location">
    <subcellularLocation>
        <location evidence="1">Nucleus</location>
    </subcellularLocation>
    <subcellularLocation>
        <location evidence="1">Chromosome</location>
        <location evidence="1">Telomere</location>
    </subcellularLocation>
</comment>
<keyword id="KW-0002">3D-structure</keyword>
<keyword id="KW-0158">Chromosome</keyword>
<keyword id="KW-0238">DNA-binding</keyword>
<keyword id="KW-0539">Nucleus</keyword>
<keyword id="KW-1185">Reference proteome</keyword>
<keyword id="KW-0779">Telomere</keyword>
<protein>
    <recommendedName>
        <fullName>Protein stn1</fullName>
    </recommendedName>
</protein>
<reference key="1">
    <citation type="journal article" date="2002" name="Nature">
        <title>The genome sequence of Schizosaccharomyces pombe.</title>
        <authorList>
            <person name="Wood V."/>
            <person name="Gwilliam R."/>
            <person name="Rajandream M.A."/>
            <person name="Lyne M.H."/>
            <person name="Lyne R."/>
            <person name="Stewart A."/>
            <person name="Sgouros J.G."/>
            <person name="Peat N."/>
            <person name="Hayles J."/>
            <person name="Baker S.G."/>
            <person name="Basham D."/>
            <person name="Bowman S."/>
            <person name="Brooks K."/>
            <person name="Brown D."/>
            <person name="Brown S."/>
            <person name="Chillingworth T."/>
            <person name="Churcher C.M."/>
            <person name="Collins M."/>
            <person name="Connor R."/>
            <person name="Cronin A."/>
            <person name="Davis P."/>
            <person name="Feltwell T."/>
            <person name="Fraser A."/>
            <person name="Gentles S."/>
            <person name="Goble A."/>
            <person name="Hamlin N."/>
            <person name="Harris D.E."/>
            <person name="Hidalgo J."/>
            <person name="Hodgson G."/>
            <person name="Holroyd S."/>
            <person name="Hornsby T."/>
            <person name="Howarth S."/>
            <person name="Huckle E.J."/>
            <person name="Hunt S."/>
            <person name="Jagels K."/>
            <person name="James K.D."/>
            <person name="Jones L."/>
            <person name="Jones M."/>
            <person name="Leather S."/>
            <person name="McDonald S."/>
            <person name="McLean J."/>
            <person name="Mooney P."/>
            <person name="Moule S."/>
            <person name="Mungall K.L."/>
            <person name="Murphy L.D."/>
            <person name="Niblett D."/>
            <person name="Odell C."/>
            <person name="Oliver K."/>
            <person name="O'Neil S."/>
            <person name="Pearson D."/>
            <person name="Quail M.A."/>
            <person name="Rabbinowitsch E."/>
            <person name="Rutherford K.M."/>
            <person name="Rutter S."/>
            <person name="Saunders D."/>
            <person name="Seeger K."/>
            <person name="Sharp S."/>
            <person name="Skelton J."/>
            <person name="Simmonds M.N."/>
            <person name="Squares R."/>
            <person name="Squares S."/>
            <person name="Stevens K."/>
            <person name="Taylor K."/>
            <person name="Taylor R.G."/>
            <person name="Tivey A."/>
            <person name="Walsh S.V."/>
            <person name="Warren T."/>
            <person name="Whitehead S."/>
            <person name="Woodward J.R."/>
            <person name="Volckaert G."/>
            <person name="Aert R."/>
            <person name="Robben J."/>
            <person name="Grymonprez B."/>
            <person name="Weltjens I."/>
            <person name="Vanstreels E."/>
            <person name="Rieger M."/>
            <person name="Schaefer M."/>
            <person name="Mueller-Auer S."/>
            <person name="Gabel C."/>
            <person name="Fuchs M."/>
            <person name="Duesterhoeft A."/>
            <person name="Fritzc C."/>
            <person name="Holzer E."/>
            <person name="Moestl D."/>
            <person name="Hilbert H."/>
            <person name="Borzym K."/>
            <person name="Langer I."/>
            <person name="Beck A."/>
            <person name="Lehrach H."/>
            <person name="Reinhardt R."/>
            <person name="Pohl T.M."/>
            <person name="Eger P."/>
            <person name="Zimmermann W."/>
            <person name="Wedler H."/>
            <person name="Wambutt R."/>
            <person name="Purnelle B."/>
            <person name="Goffeau A."/>
            <person name="Cadieu E."/>
            <person name="Dreano S."/>
            <person name="Gloux S."/>
            <person name="Lelaure V."/>
            <person name="Mottier S."/>
            <person name="Galibert F."/>
            <person name="Aves S.J."/>
            <person name="Xiang Z."/>
            <person name="Hunt C."/>
            <person name="Moore K."/>
            <person name="Hurst S.M."/>
            <person name="Lucas M."/>
            <person name="Rochet M."/>
            <person name="Gaillardin C."/>
            <person name="Tallada V.A."/>
            <person name="Garzon A."/>
            <person name="Thode G."/>
            <person name="Daga R.R."/>
            <person name="Cruzado L."/>
            <person name="Jimenez J."/>
            <person name="Sanchez M."/>
            <person name="del Rey F."/>
            <person name="Benito J."/>
            <person name="Dominguez A."/>
            <person name="Revuelta J.L."/>
            <person name="Moreno S."/>
            <person name="Armstrong J."/>
            <person name="Forsburg S.L."/>
            <person name="Cerutti L."/>
            <person name="Lowe T."/>
            <person name="McCombie W.R."/>
            <person name="Paulsen I."/>
            <person name="Potashkin J."/>
            <person name="Shpakovski G.V."/>
            <person name="Ussery D."/>
            <person name="Barrell B.G."/>
            <person name="Nurse P."/>
        </authorList>
    </citation>
    <scope>NUCLEOTIDE SEQUENCE [LARGE SCALE GENOMIC DNA]</scope>
    <source>
        <strain>972 / ATCC 24843</strain>
    </source>
</reference>
<reference key="2">
    <citation type="journal article" date="2007" name="Proc. Natl. Acad. Sci. U.S.A.">
        <title>Protection of telomeres by a conserved Stn1-Ten1 complex.</title>
        <authorList>
            <person name="Martin V."/>
            <person name="Du L.-L."/>
            <person name="Rozenzhak S."/>
            <person name="Russell P."/>
        </authorList>
    </citation>
    <scope>FUNCTION</scope>
    <scope>INTERACTION WITH TEN1</scope>
    <scope>SUBCELLULAR LOCATION</scope>
</reference>
<feature type="chain" id="PRO_0000312637" description="Protein stn1">
    <location>
        <begin position="1"/>
        <end position="325"/>
    </location>
</feature>
<feature type="DNA-binding region" description="OB">
    <location>
        <begin position="50"/>
        <end position="126"/>
    </location>
</feature>
<feature type="helix" evidence="2">
    <location>
        <begin position="23"/>
        <end position="26"/>
    </location>
</feature>
<feature type="strand" evidence="2">
    <location>
        <begin position="40"/>
        <end position="42"/>
    </location>
</feature>
<feature type="strand" evidence="2">
    <location>
        <begin position="45"/>
        <end position="47"/>
    </location>
</feature>
<feature type="strand" evidence="2">
    <location>
        <begin position="49"/>
        <end position="62"/>
    </location>
</feature>
<feature type="strand" evidence="2">
    <location>
        <begin position="65"/>
        <end position="71"/>
    </location>
</feature>
<feature type="strand" evidence="2">
    <location>
        <begin position="73"/>
        <end position="75"/>
    </location>
</feature>
<feature type="strand" evidence="2">
    <location>
        <begin position="77"/>
        <end position="83"/>
    </location>
</feature>
<feature type="helix" evidence="2">
    <location>
        <begin position="84"/>
        <end position="86"/>
    </location>
</feature>
<feature type="helix" evidence="2">
    <location>
        <begin position="88"/>
        <end position="94"/>
    </location>
</feature>
<feature type="strand" evidence="2">
    <location>
        <begin position="102"/>
        <end position="110"/>
    </location>
</feature>
<feature type="strand" evidence="2">
    <location>
        <begin position="112"/>
        <end position="115"/>
    </location>
</feature>
<feature type="strand" evidence="2">
    <location>
        <begin position="117"/>
        <end position="126"/>
    </location>
</feature>
<feature type="helix" evidence="2">
    <location>
        <begin position="131"/>
        <end position="153"/>
    </location>
</feature>
<evidence type="ECO:0000269" key="1">
    <source>
    </source>
</evidence>
<evidence type="ECO:0007829" key="2">
    <source>
        <dbReference type="PDB" id="3KF6"/>
    </source>
</evidence>